<dbReference type="EMBL" id="AE004437">
    <property type="protein sequence ID" value="AAG20640.1"/>
    <property type="molecule type" value="Genomic_DNA"/>
</dbReference>
<dbReference type="PIR" id="D84409">
    <property type="entry name" value="D84409"/>
</dbReference>
<dbReference type="RefSeq" id="WP_010903942.1">
    <property type="nucleotide sequence ID" value="NC_002607.1"/>
</dbReference>
<dbReference type="STRING" id="64091.VNG_2599H"/>
<dbReference type="PaxDb" id="64091-VNG_2599H"/>
<dbReference type="KEGG" id="hal:VNG_2599H"/>
<dbReference type="PATRIC" id="fig|64091.14.peg.2013"/>
<dbReference type="HOGENOM" id="CLU_208205_0_0_2"/>
<dbReference type="InParanoid" id="Q9HMD1"/>
<dbReference type="OrthoDB" id="43651at2157"/>
<dbReference type="Proteomes" id="UP000000554">
    <property type="component" value="Chromosome"/>
</dbReference>
<dbReference type="GO" id="GO:0005886">
    <property type="term" value="C:plasma membrane"/>
    <property type="evidence" value="ECO:0007669"/>
    <property type="project" value="UniProtKB-SubCell"/>
</dbReference>
<dbReference type="GO" id="GO:0015031">
    <property type="term" value="P:protein transport"/>
    <property type="evidence" value="ECO:0007669"/>
    <property type="project" value="UniProtKB-UniRule"/>
</dbReference>
<dbReference type="HAMAP" id="MF_00751">
    <property type="entry name" value="SecG"/>
    <property type="match status" value="1"/>
</dbReference>
<dbReference type="InterPro" id="IPR023531">
    <property type="entry name" value="Preprot_translocase_SecG"/>
</dbReference>
<dbReference type="InterPro" id="IPR016482">
    <property type="entry name" value="SecG/Sec61-beta/Sbh"/>
</dbReference>
<dbReference type="NCBIfam" id="NF002318">
    <property type="entry name" value="PRK01253.1"/>
    <property type="match status" value="1"/>
</dbReference>
<dbReference type="Pfam" id="PF03911">
    <property type="entry name" value="Sec61_beta"/>
    <property type="match status" value="1"/>
</dbReference>
<comment type="function">
    <text evidence="1">Involved in protein export. The function of the beta subunit is unknown, but it may be involved in stabilization of the trimeric complex (By similarity).</text>
</comment>
<comment type="subunit">
    <text evidence="1">Component of the protein translocase complex. Heterotrimer consisting of alpha (SecY), beta (SecG) and gamma (SecE) subunits. Can form oligomers of the heterotrimer (By similarity).</text>
</comment>
<comment type="subcellular location">
    <subcellularLocation>
        <location evidence="1">Cell membrane</location>
        <topology evidence="1">Single-pass membrane protein</topology>
    </subcellularLocation>
</comment>
<comment type="similarity">
    <text evidence="2">Belongs to the SEC61-beta family.</text>
</comment>
<feature type="chain" id="PRO_0000157266" description="Preprotein translocase subunit SecG">
    <location>
        <begin position="1"/>
        <end position="53"/>
    </location>
</feature>
<feature type="topological domain" description="Cytoplasmic" evidence="1">
    <location>
        <begin position="1"/>
        <end position="31"/>
    </location>
</feature>
<feature type="transmembrane region" description="Helical" evidence="1">
    <location>
        <begin position="32"/>
        <end position="51"/>
    </location>
</feature>
<feature type="topological domain" description="Extracellular" evidence="1">
    <location>
        <begin position="52"/>
        <end position="53"/>
    </location>
</feature>
<keyword id="KW-1003">Cell membrane</keyword>
<keyword id="KW-0472">Membrane</keyword>
<keyword id="KW-0653">Protein transport</keyword>
<keyword id="KW-1185">Reference proteome</keyword>
<keyword id="KW-0811">Translocation</keyword>
<keyword id="KW-0812">Transmembrane</keyword>
<keyword id="KW-1133">Transmembrane helix</keyword>
<keyword id="KW-0813">Transport</keyword>
<accession>Q9HMD1</accession>
<sequence>MSSGQNSGGLMSSAGLVRYFDSEDSNALQIDPRSVVAVGAFFGLVVLLAQFFA</sequence>
<name>SECG_HALSA</name>
<protein>
    <recommendedName>
        <fullName>Preprotein translocase subunit SecG</fullName>
    </recommendedName>
    <alternativeName>
        <fullName>Protein transport protein Sec61 subunit beta homolog</fullName>
    </alternativeName>
</protein>
<gene>
    <name type="primary">secG</name>
    <name type="ordered locus">VNG_2599H</name>
</gene>
<proteinExistence type="inferred from homology"/>
<evidence type="ECO:0000250" key="1"/>
<evidence type="ECO:0000305" key="2"/>
<organism>
    <name type="scientific">Halobacterium salinarum (strain ATCC 700922 / JCM 11081 / NRC-1)</name>
    <name type="common">Halobacterium halobium</name>
    <dbReference type="NCBI Taxonomy" id="64091"/>
    <lineage>
        <taxon>Archaea</taxon>
        <taxon>Methanobacteriati</taxon>
        <taxon>Methanobacteriota</taxon>
        <taxon>Stenosarchaea group</taxon>
        <taxon>Halobacteria</taxon>
        <taxon>Halobacteriales</taxon>
        <taxon>Halobacteriaceae</taxon>
        <taxon>Halobacterium</taxon>
        <taxon>Halobacterium salinarum NRC-34001</taxon>
    </lineage>
</organism>
<reference key="1">
    <citation type="journal article" date="2000" name="Proc. Natl. Acad. Sci. U.S.A.">
        <title>Genome sequence of Halobacterium species NRC-1.</title>
        <authorList>
            <person name="Ng W.V."/>
            <person name="Kennedy S.P."/>
            <person name="Mahairas G.G."/>
            <person name="Berquist B."/>
            <person name="Pan M."/>
            <person name="Shukla H.D."/>
            <person name="Lasky S.R."/>
            <person name="Baliga N.S."/>
            <person name="Thorsson V."/>
            <person name="Sbrogna J."/>
            <person name="Swartzell S."/>
            <person name="Weir D."/>
            <person name="Hall J."/>
            <person name="Dahl T.A."/>
            <person name="Welti R."/>
            <person name="Goo Y.A."/>
            <person name="Leithauser B."/>
            <person name="Keller K."/>
            <person name="Cruz R."/>
            <person name="Danson M.J."/>
            <person name="Hough D.W."/>
            <person name="Maddocks D.G."/>
            <person name="Jablonski P.E."/>
            <person name="Krebs M.P."/>
            <person name="Angevine C.M."/>
            <person name="Dale H."/>
            <person name="Isenbarger T.A."/>
            <person name="Peck R.F."/>
            <person name="Pohlschroder M."/>
            <person name="Spudich J.L."/>
            <person name="Jung K.-H."/>
            <person name="Alam M."/>
            <person name="Freitas T."/>
            <person name="Hou S."/>
            <person name="Daniels C.J."/>
            <person name="Dennis P.P."/>
            <person name="Omer A.D."/>
            <person name="Ebhardt H."/>
            <person name="Lowe T.M."/>
            <person name="Liang P."/>
            <person name="Riley M."/>
            <person name="Hood L."/>
            <person name="DasSarma S."/>
        </authorList>
    </citation>
    <scope>NUCLEOTIDE SEQUENCE [LARGE SCALE GENOMIC DNA]</scope>
    <source>
        <strain>ATCC 700922 / JCM 11081 / NRC-1</strain>
    </source>
</reference>